<accession>A5V3H3</accession>
<protein>
    <recommendedName>
        <fullName evidence="1">Large ribosomal subunit protein bL31</fullName>
    </recommendedName>
    <alternativeName>
        <fullName evidence="2">50S ribosomal protein L31</fullName>
    </alternativeName>
</protein>
<name>RL31_RHIWR</name>
<reference key="1">
    <citation type="journal article" date="2010" name="J. Bacteriol.">
        <title>Genome sequence of the dioxin-mineralizing bacterium Sphingomonas wittichii RW1.</title>
        <authorList>
            <person name="Miller T.R."/>
            <person name="Delcher A.L."/>
            <person name="Salzberg S.L."/>
            <person name="Saunders E."/>
            <person name="Detter J.C."/>
            <person name="Halden R.U."/>
        </authorList>
    </citation>
    <scope>NUCLEOTIDE SEQUENCE [LARGE SCALE GENOMIC DNA]</scope>
    <source>
        <strain>DSM 6014 / CCUG 31198 / JCM 15750 / NBRC 105917 / EY 4224 / RW1</strain>
    </source>
</reference>
<evidence type="ECO:0000255" key="1">
    <source>
        <dbReference type="HAMAP-Rule" id="MF_00501"/>
    </source>
</evidence>
<evidence type="ECO:0000305" key="2"/>
<organism>
    <name type="scientific">Rhizorhabdus wittichii (strain DSM 6014 / CCUG 31198 / JCM 15750 / NBRC 105917 / EY 4224 / RW1)</name>
    <name type="common">Sphingomonas wittichii</name>
    <dbReference type="NCBI Taxonomy" id="392499"/>
    <lineage>
        <taxon>Bacteria</taxon>
        <taxon>Pseudomonadati</taxon>
        <taxon>Pseudomonadota</taxon>
        <taxon>Alphaproteobacteria</taxon>
        <taxon>Sphingomonadales</taxon>
        <taxon>Sphingomonadaceae</taxon>
        <taxon>Rhizorhabdus</taxon>
    </lineage>
</organism>
<comment type="function">
    <text evidence="1">Binds the 23S rRNA.</text>
</comment>
<comment type="subunit">
    <text evidence="1">Part of the 50S ribosomal subunit.</text>
</comment>
<comment type="similarity">
    <text evidence="1">Belongs to the bacterial ribosomal protein bL31 family. Type A subfamily.</text>
</comment>
<dbReference type="EMBL" id="CP000699">
    <property type="protein sequence ID" value="ABQ66839.1"/>
    <property type="molecule type" value="Genomic_DNA"/>
</dbReference>
<dbReference type="SMR" id="A5V3H3"/>
<dbReference type="STRING" id="392499.Swit_0471"/>
<dbReference type="PaxDb" id="392499-Swit_0471"/>
<dbReference type="KEGG" id="swi:Swit_0471"/>
<dbReference type="eggNOG" id="COG0254">
    <property type="taxonomic scope" value="Bacteria"/>
</dbReference>
<dbReference type="HOGENOM" id="CLU_114306_3_2_5"/>
<dbReference type="OrthoDB" id="9803251at2"/>
<dbReference type="Proteomes" id="UP000001989">
    <property type="component" value="Chromosome"/>
</dbReference>
<dbReference type="GO" id="GO:1990904">
    <property type="term" value="C:ribonucleoprotein complex"/>
    <property type="evidence" value="ECO:0007669"/>
    <property type="project" value="UniProtKB-KW"/>
</dbReference>
<dbReference type="GO" id="GO:0005840">
    <property type="term" value="C:ribosome"/>
    <property type="evidence" value="ECO:0007669"/>
    <property type="project" value="UniProtKB-KW"/>
</dbReference>
<dbReference type="GO" id="GO:0019843">
    <property type="term" value="F:rRNA binding"/>
    <property type="evidence" value="ECO:0007669"/>
    <property type="project" value="UniProtKB-KW"/>
</dbReference>
<dbReference type="GO" id="GO:0003735">
    <property type="term" value="F:structural constituent of ribosome"/>
    <property type="evidence" value="ECO:0007669"/>
    <property type="project" value="InterPro"/>
</dbReference>
<dbReference type="GO" id="GO:0006412">
    <property type="term" value="P:translation"/>
    <property type="evidence" value="ECO:0007669"/>
    <property type="project" value="UniProtKB-UniRule"/>
</dbReference>
<dbReference type="Gene3D" id="4.10.830.30">
    <property type="entry name" value="Ribosomal protein L31"/>
    <property type="match status" value="1"/>
</dbReference>
<dbReference type="HAMAP" id="MF_00501">
    <property type="entry name" value="Ribosomal_bL31_1"/>
    <property type="match status" value="1"/>
</dbReference>
<dbReference type="InterPro" id="IPR034704">
    <property type="entry name" value="Ribosomal_bL28/bL31-like_sf"/>
</dbReference>
<dbReference type="InterPro" id="IPR002150">
    <property type="entry name" value="Ribosomal_bL31"/>
</dbReference>
<dbReference type="InterPro" id="IPR027491">
    <property type="entry name" value="Ribosomal_bL31_A"/>
</dbReference>
<dbReference type="InterPro" id="IPR042105">
    <property type="entry name" value="Ribosomal_bL31_sf"/>
</dbReference>
<dbReference type="NCBIfam" id="TIGR00105">
    <property type="entry name" value="L31"/>
    <property type="match status" value="1"/>
</dbReference>
<dbReference type="NCBIfam" id="NF001809">
    <property type="entry name" value="PRK00528.1"/>
    <property type="match status" value="1"/>
</dbReference>
<dbReference type="PANTHER" id="PTHR33280">
    <property type="entry name" value="50S RIBOSOMAL PROTEIN L31, CHLOROPLASTIC"/>
    <property type="match status" value="1"/>
</dbReference>
<dbReference type="PANTHER" id="PTHR33280:SF6">
    <property type="entry name" value="LARGE RIBOSOMAL SUBUNIT PROTEIN BL31A"/>
    <property type="match status" value="1"/>
</dbReference>
<dbReference type="Pfam" id="PF01197">
    <property type="entry name" value="Ribosomal_L31"/>
    <property type="match status" value="1"/>
</dbReference>
<dbReference type="PRINTS" id="PR01249">
    <property type="entry name" value="RIBOSOMALL31"/>
</dbReference>
<dbReference type="SUPFAM" id="SSF143800">
    <property type="entry name" value="L28p-like"/>
    <property type="match status" value="1"/>
</dbReference>
<dbReference type="PROSITE" id="PS01143">
    <property type="entry name" value="RIBOSOMAL_L31"/>
    <property type="match status" value="1"/>
</dbReference>
<keyword id="KW-1185">Reference proteome</keyword>
<keyword id="KW-0687">Ribonucleoprotein</keyword>
<keyword id="KW-0689">Ribosomal protein</keyword>
<keyword id="KW-0694">RNA-binding</keyword>
<keyword id="KW-0699">rRNA-binding</keyword>
<proteinExistence type="inferred from homology"/>
<feature type="chain" id="PRO_1000126744" description="Large ribosomal subunit protein bL31">
    <location>
        <begin position="1"/>
        <end position="76"/>
    </location>
</feature>
<sequence>MKKDIHPDYHSITVQLVDGTTYQTRSTYGSAGDTLQLDIDPSVHPAWTGGKSHMLDAGGQVARFNKRFGGLTLGKK</sequence>
<gene>
    <name evidence="1" type="primary">rpmE</name>
    <name type="ordered locus">Swit_0471</name>
</gene>